<reference key="1">
    <citation type="journal article" date="1999" name="Plant Physiol.">
        <title>Characterization and expression of four proline-rich cell wall protein genes in Arabidopsis encoding two distinct subsets of multiple domain proteins.</title>
        <authorList>
            <person name="Fowler T.J."/>
            <person name="Bernhardt C."/>
            <person name="Tierney M.L."/>
        </authorList>
    </citation>
    <scope>NUCLEOTIDE SEQUENCE [GENOMIC DNA]</scope>
    <scope>TISSUE SPECIFICITY</scope>
    <scope>DEVELOPMENTAL STAGE</scope>
    <source>
        <strain>cv. Columbia</strain>
        <strain>cv. Landsberg erecta</strain>
    </source>
</reference>
<reference key="2">
    <citation type="journal article" date="2000" name="Nature">
        <title>Sequence and analysis of chromosome 3 of the plant Arabidopsis thaliana.</title>
        <authorList>
            <person name="Salanoubat M."/>
            <person name="Lemcke K."/>
            <person name="Rieger M."/>
            <person name="Ansorge W."/>
            <person name="Unseld M."/>
            <person name="Fartmann B."/>
            <person name="Valle G."/>
            <person name="Bloecker H."/>
            <person name="Perez-Alonso M."/>
            <person name="Obermaier B."/>
            <person name="Delseny M."/>
            <person name="Boutry M."/>
            <person name="Grivell L.A."/>
            <person name="Mache R."/>
            <person name="Puigdomenech P."/>
            <person name="De Simone V."/>
            <person name="Choisne N."/>
            <person name="Artiguenave F."/>
            <person name="Robert C."/>
            <person name="Brottier P."/>
            <person name="Wincker P."/>
            <person name="Cattolico L."/>
            <person name="Weissenbach J."/>
            <person name="Saurin W."/>
            <person name="Quetier F."/>
            <person name="Schaefer M."/>
            <person name="Mueller-Auer S."/>
            <person name="Gabel C."/>
            <person name="Fuchs M."/>
            <person name="Benes V."/>
            <person name="Wurmbach E."/>
            <person name="Drzonek H."/>
            <person name="Erfle H."/>
            <person name="Jordan N."/>
            <person name="Bangert S."/>
            <person name="Wiedelmann R."/>
            <person name="Kranz H."/>
            <person name="Voss H."/>
            <person name="Holland R."/>
            <person name="Brandt P."/>
            <person name="Nyakatura G."/>
            <person name="Vezzi A."/>
            <person name="D'Angelo M."/>
            <person name="Pallavicini A."/>
            <person name="Toppo S."/>
            <person name="Simionati B."/>
            <person name="Conrad A."/>
            <person name="Hornischer K."/>
            <person name="Kauer G."/>
            <person name="Loehnert T.-H."/>
            <person name="Nordsiek G."/>
            <person name="Reichelt J."/>
            <person name="Scharfe M."/>
            <person name="Schoen O."/>
            <person name="Bargues M."/>
            <person name="Terol J."/>
            <person name="Climent J."/>
            <person name="Navarro P."/>
            <person name="Collado C."/>
            <person name="Perez-Perez A."/>
            <person name="Ottenwaelder B."/>
            <person name="Duchemin D."/>
            <person name="Cooke R."/>
            <person name="Laudie M."/>
            <person name="Berger-Llauro C."/>
            <person name="Purnelle B."/>
            <person name="Masuy D."/>
            <person name="de Haan M."/>
            <person name="Maarse A.C."/>
            <person name="Alcaraz J.-P."/>
            <person name="Cottet A."/>
            <person name="Casacuberta E."/>
            <person name="Monfort A."/>
            <person name="Argiriou A."/>
            <person name="Flores M."/>
            <person name="Liguori R."/>
            <person name="Vitale D."/>
            <person name="Mannhaupt G."/>
            <person name="Haase D."/>
            <person name="Schoof H."/>
            <person name="Rudd S."/>
            <person name="Zaccaria P."/>
            <person name="Mewes H.-W."/>
            <person name="Mayer K.F.X."/>
            <person name="Kaul S."/>
            <person name="Town C.D."/>
            <person name="Koo H.L."/>
            <person name="Tallon L.J."/>
            <person name="Jenkins J."/>
            <person name="Rooney T."/>
            <person name="Rizzo M."/>
            <person name="Walts A."/>
            <person name="Utterback T."/>
            <person name="Fujii C.Y."/>
            <person name="Shea T.P."/>
            <person name="Creasy T.H."/>
            <person name="Haas B."/>
            <person name="Maiti R."/>
            <person name="Wu D."/>
            <person name="Peterson J."/>
            <person name="Van Aken S."/>
            <person name="Pai G."/>
            <person name="Militscher J."/>
            <person name="Sellers P."/>
            <person name="Gill J.E."/>
            <person name="Feldblyum T.V."/>
            <person name="Preuss D."/>
            <person name="Lin X."/>
            <person name="Nierman W.C."/>
            <person name="Salzberg S.L."/>
            <person name="White O."/>
            <person name="Venter J.C."/>
            <person name="Fraser C.M."/>
            <person name="Kaneko T."/>
            <person name="Nakamura Y."/>
            <person name="Sato S."/>
            <person name="Kato T."/>
            <person name="Asamizu E."/>
            <person name="Sasamoto S."/>
            <person name="Kimura T."/>
            <person name="Idesawa K."/>
            <person name="Kawashima K."/>
            <person name="Kishida Y."/>
            <person name="Kiyokawa C."/>
            <person name="Kohara M."/>
            <person name="Matsumoto M."/>
            <person name="Matsuno A."/>
            <person name="Muraki A."/>
            <person name="Nakayama S."/>
            <person name="Nakazaki N."/>
            <person name="Shinpo S."/>
            <person name="Takeuchi C."/>
            <person name="Wada T."/>
            <person name="Watanabe A."/>
            <person name="Yamada M."/>
            <person name="Yasuda M."/>
            <person name="Tabata S."/>
        </authorList>
    </citation>
    <scope>NUCLEOTIDE SEQUENCE [LARGE SCALE GENOMIC DNA]</scope>
    <source>
        <strain>cv. Columbia</strain>
    </source>
</reference>
<reference key="3">
    <citation type="journal article" date="2017" name="Plant J.">
        <title>Araport11: a complete reannotation of the Arabidopsis thaliana reference genome.</title>
        <authorList>
            <person name="Cheng C.Y."/>
            <person name="Krishnakumar V."/>
            <person name="Chan A.P."/>
            <person name="Thibaud-Nissen F."/>
            <person name="Schobel S."/>
            <person name="Town C.D."/>
        </authorList>
    </citation>
    <scope>GENOME REANNOTATION</scope>
    <source>
        <strain>cv. Columbia</strain>
    </source>
</reference>
<reference key="4">
    <citation type="journal article" date="2000" name="Plant Physiol.">
        <title>Expression of AtPRP3, a proline-rich structural cell wall protein from Arabidopsis, is regulated by cell-type-specific developmental pathways involved in root hair formation.</title>
        <authorList>
            <person name="Bernhardt C."/>
            <person name="Tierney M.L."/>
        </authorList>
    </citation>
    <scope>FUNCTION</scope>
    <scope>TISSUE SPECIFICITY</scope>
    <scope>DEVELOPMENTAL STAGE</scope>
    <scope>INDUCTION BY ACC AND NAA</scope>
    <source>
        <strain>cv. Columbia</strain>
    </source>
</reference>
<reference key="5">
    <citation type="journal article" date="2006" name="Plant Cell">
        <title>Functional conservation of a root hair cell-specific cis-element in angiosperms with different root hair distribution patterns.</title>
        <authorList>
            <person name="Kim D.W."/>
            <person name="Lee S.H."/>
            <person name="Choi S.-B."/>
            <person name="Won S.-K."/>
            <person name="Heo Y.-K."/>
            <person name="Cho M."/>
            <person name="Park Y.-I."/>
            <person name="Cho H.-T."/>
        </authorList>
    </citation>
    <scope>TISSUE SPECIFICITY</scope>
</reference>
<gene>
    <name type="primary">PRP3</name>
    <name type="ordered locus">At3g62680</name>
    <name type="ORF">F26K9.110</name>
</gene>
<feature type="signal peptide" evidence="1">
    <location>
        <begin position="1"/>
        <end position="22"/>
    </location>
</feature>
<feature type="chain" id="PRO_0000419274" description="Proline-rich protein 3">
    <location>
        <begin position="23"/>
        <end position="313"/>
    </location>
</feature>
<feature type="repeat" description="1">
    <location>
        <begin position="30"/>
        <end position="34"/>
    </location>
</feature>
<feature type="repeat" description="2">
    <location>
        <begin position="35"/>
        <end position="39"/>
    </location>
</feature>
<feature type="repeat" description="3">
    <location>
        <begin position="40"/>
        <end position="43"/>
    </location>
</feature>
<feature type="repeat" description="4">
    <location>
        <begin position="44"/>
        <end position="48"/>
    </location>
</feature>
<feature type="repeat" description="5">
    <location>
        <begin position="49"/>
        <end position="53"/>
    </location>
</feature>
<feature type="repeat" description="6">
    <location>
        <begin position="54"/>
        <end position="57"/>
    </location>
</feature>
<feature type="repeat" description="7">
    <location>
        <begin position="58"/>
        <end position="62"/>
    </location>
</feature>
<feature type="repeat" description="8">
    <location>
        <begin position="64"/>
        <end position="67"/>
    </location>
</feature>
<feature type="repeat" description="9">
    <location>
        <begin position="68"/>
        <end position="72"/>
    </location>
</feature>
<feature type="repeat" description="10">
    <location>
        <begin position="73"/>
        <end position="77"/>
    </location>
</feature>
<feature type="repeat" description="11">
    <location>
        <begin position="82"/>
        <end position="86"/>
    </location>
</feature>
<feature type="repeat" description="12">
    <location>
        <begin position="87"/>
        <end position="91"/>
    </location>
</feature>
<feature type="repeat" description="13">
    <location>
        <begin position="92"/>
        <end position="96"/>
    </location>
</feature>
<feature type="repeat" description="14">
    <location>
        <begin position="97"/>
        <end position="101"/>
    </location>
</feature>
<feature type="repeat" description="15">
    <location>
        <begin position="102"/>
        <end position="105"/>
    </location>
</feature>
<feature type="repeat" description="16">
    <location>
        <begin position="106"/>
        <end position="110"/>
    </location>
</feature>
<feature type="repeat" description="17">
    <location>
        <begin position="111"/>
        <end position="115"/>
    </location>
</feature>
<feature type="repeat" description="18">
    <location>
        <begin position="116"/>
        <end position="120"/>
    </location>
</feature>
<feature type="repeat" description="19">
    <location>
        <begin position="121"/>
        <end position="125"/>
    </location>
</feature>
<feature type="repeat" description="20">
    <location>
        <begin position="126"/>
        <end position="131"/>
    </location>
</feature>
<feature type="repeat" description="21">
    <location>
        <begin position="132"/>
        <end position="136"/>
    </location>
</feature>
<feature type="repeat" description="22">
    <location>
        <begin position="137"/>
        <end position="141"/>
    </location>
</feature>
<feature type="repeat" description="23">
    <location>
        <begin position="142"/>
        <end position="146"/>
    </location>
</feature>
<feature type="repeat" description="24">
    <location>
        <begin position="147"/>
        <end position="150"/>
    </location>
</feature>
<feature type="repeat" description="25">
    <location>
        <begin position="151"/>
        <end position="155"/>
    </location>
</feature>
<feature type="repeat" description="26">
    <location>
        <begin position="157"/>
        <end position="163"/>
    </location>
</feature>
<feature type="repeat" description="27">
    <location>
        <begin position="164"/>
        <end position="168"/>
    </location>
</feature>
<feature type="repeat" description="28">
    <location>
        <begin position="169"/>
        <end position="174"/>
    </location>
</feature>
<feature type="repeat" description="29">
    <location>
        <begin position="175"/>
        <end position="181"/>
    </location>
</feature>
<feature type="repeat" description="30">
    <location>
        <begin position="182"/>
        <end position="186"/>
    </location>
</feature>
<feature type="repeat" description="31">
    <location>
        <begin position="187"/>
        <end position="229"/>
    </location>
</feature>
<feature type="repeat" description="32">
    <location>
        <begin position="258"/>
        <end position="262"/>
    </location>
</feature>
<feature type="repeat" description="33">
    <location>
        <begin position="266"/>
        <end position="270"/>
    </location>
</feature>
<feature type="repeat" description="34">
    <location>
        <begin position="298"/>
        <end position="302"/>
    </location>
</feature>
<feature type="repeat" description="35">
    <location>
        <begin position="308"/>
        <end position="312"/>
    </location>
</feature>
<feature type="region of interest" description="35 X 5 AA approximate repeats">
    <location>
        <begin position="27"/>
        <end position="312"/>
    </location>
</feature>
<feature type="sequence conflict" description="In Ref. 1; AAF64550." evidence="5" ref="1">
    <original>V</original>
    <variation>D</variation>
    <location>
        <position position="129"/>
    </location>
</feature>
<feature type="sequence conflict" description="In Ref. 1; AAF64550." evidence="5" ref="1">
    <original>L</original>
    <variation>V</variation>
    <location>
        <position position="240"/>
    </location>
</feature>
<keyword id="KW-0134">Cell wall</keyword>
<keyword id="KW-1185">Reference proteome</keyword>
<keyword id="KW-0677">Repeat</keyword>
<keyword id="KW-0964">Secreted</keyword>
<keyword id="KW-0732">Signal</keyword>
<organism>
    <name type="scientific">Arabidopsis thaliana</name>
    <name type="common">Mouse-ear cress</name>
    <dbReference type="NCBI Taxonomy" id="3702"/>
    <lineage>
        <taxon>Eukaryota</taxon>
        <taxon>Viridiplantae</taxon>
        <taxon>Streptophyta</taxon>
        <taxon>Embryophyta</taxon>
        <taxon>Tracheophyta</taxon>
        <taxon>Spermatophyta</taxon>
        <taxon>Magnoliopsida</taxon>
        <taxon>eudicotyledons</taxon>
        <taxon>Gunneridae</taxon>
        <taxon>Pentapetalae</taxon>
        <taxon>rosids</taxon>
        <taxon>malvids</taxon>
        <taxon>Brassicales</taxon>
        <taxon>Brassicaceae</taxon>
        <taxon>Camelineae</taxon>
        <taxon>Arabidopsis</taxon>
    </lineage>
</organism>
<dbReference type="EMBL" id="AF110987">
    <property type="protein sequence ID" value="AAF64550.1"/>
    <property type="molecule type" value="Genomic_DNA"/>
</dbReference>
<dbReference type="EMBL" id="AL162651">
    <property type="protein sequence ID" value="CAB83118.1"/>
    <property type="molecule type" value="Genomic_DNA"/>
</dbReference>
<dbReference type="EMBL" id="CP002686">
    <property type="protein sequence ID" value="AEE80379.1"/>
    <property type="molecule type" value="Genomic_DNA"/>
</dbReference>
<dbReference type="PIR" id="T48057">
    <property type="entry name" value="T48057"/>
</dbReference>
<dbReference type="PIR" id="T52077">
    <property type="entry name" value="T52077"/>
</dbReference>
<dbReference type="RefSeq" id="NP_191827.1">
    <property type="nucleotide sequence ID" value="NM_116133.3"/>
</dbReference>
<dbReference type="SMR" id="Q9LZJ7"/>
<dbReference type="FunCoup" id="Q9LZJ7">
    <property type="interactions" value="16"/>
</dbReference>
<dbReference type="STRING" id="3702.Q9LZJ7"/>
<dbReference type="GlyGen" id="Q9LZJ7">
    <property type="glycosylation" value="1 site"/>
</dbReference>
<dbReference type="iPTMnet" id="Q9LZJ7"/>
<dbReference type="PaxDb" id="3702-AT3G62680.1"/>
<dbReference type="ProteomicsDB" id="226379"/>
<dbReference type="EnsemblPlants" id="AT3G62680.1">
    <property type="protein sequence ID" value="AT3G62680.1"/>
    <property type="gene ID" value="AT3G62680"/>
</dbReference>
<dbReference type="GeneID" id="825442"/>
<dbReference type="Gramene" id="AT3G62680.1">
    <property type="protein sequence ID" value="AT3G62680.1"/>
    <property type="gene ID" value="AT3G62680"/>
</dbReference>
<dbReference type="KEGG" id="ath:AT3G62680"/>
<dbReference type="Araport" id="AT3G62680"/>
<dbReference type="TAIR" id="AT3G62680">
    <property type="gene designation" value="PRP3"/>
</dbReference>
<dbReference type="eggNOG" id="ENOG502SDZ3">
    <property type="taxonomic scope" value="Eukaryota"/>
</dbReference>
<dbReference type="HOGENOM" id="CLU_071703_0_0_1"/>
<dbReference type="InParanoid" id="Q9LZJ7"/>
<dbReference type="OMA" id="KPYVNQP"/>
<dbReference type="OrthoDB" id="1094825at2759"/>
<dbReference type="PRO" id="PR:Q9LZJ7"/>
<dbReference type="Proteomes" id="UP000006548">
    <property type="component" value="Chromosome 3"/>
</dbReference>
<dbReference type="ExpressionAtlas" id="Q9LZJ7">
    <property type="expression patterns" value="baseline and differential"/>
</dbReference>
<dbReference type="GO" id="GO:0005576">
    <property type="term" value="C:extracellular region"/>
    <property type="evidence" value="ECO:0007669"/>
    <property type="project" value="UniProtKB-KW"/>
</dbReference>
<dbReference type="GO" id="GO:0009506">
    <property type="term" value="C:plasmodesma"/>
    <property type="evidence" value="ECO:0007005"/>
    <property type="project" value="TAIR"/>
</dbReference>
<dbReference type="GO" id="GO:0071365">
    <property type="term" value="P:cellular response to auxin stimulus"/>
    <property type="evidence" value="ECO:0000270"/>
    <property type="project" value="UniProtKB"/>
</dbReference>
<dbReference type="GO" id="GO:0072732">
    <property type="term" value="P:cellular response to calcium ion starvation"/>
    <property type="evidence" value="ECO:0000270"/>
    <property type="project" value="UniProtKB"/>
</dbReference>
<dbReference type="GO" id="GO:0071369">
    <property type="term" value="P:cellular response to ethylene stimulus"/>
    <property type="evidence" value="ECO:0000270"/>
    <property type="project" value="UniProtKB"/>
</dbReference>
<dbReference type="GO" id="GO:0010054">
    <property type="term" value="P:trichoblast differentiation"/>
    <property type="evidence" value="ECO:0000304"/>
    <property type="project" value="TAIR"/>
</dbReference>
<dbReference type="PANTHER" id="PTHR33470">
    <property type="entry name" value="OS01G0164075 PROTEIN"/>
    <property type="match status" value="1"/>
</dbReference>
<dbReference type="PANTHER" id="PTHR33470:SF50">
    <property type="entry name" value="PROLINE-RICH PROTEIN 1-RELATED"/>
    <property type="match status" value="1"/>
</dbReference>
<dbReference type="Pfam" id="PF01190">
    <property type="entry name" value="Pollen_Ole_e_1"/>
    <property type="match status" value="1"/>
</dbReference>
<dbReference type="PRINTS" id="PR01217">
    <property type="entry name" value="PRICHEXTENSN"/>
</dbReference>
<proteinExistence type="evidence at transcript level"/>
<sequence>MAITRSSLAICLILSLVTITTADYYSPSSPPVYKSPEHKPTLPSPVYTPPVYKPTLSPPVYTKPTIPPPVYTPPVYKHTPSPPVYTKPTIPPPVYTPPVYKPTLSPPVYTKPTIPPPVYTPPVYKPTPVYTKPTIPPPVYTPPVYKPTPSPPVYKKSPSYSSPPPPYVPKPTYTPTTKPYVPEILKAVDGIILCKNGYETYPILGAKIQIVCSDPASYGKSNTEVVIYSNPTDSKGYFHLSLTSIKDLAYCRVKLYLSPVETCKNPTNVNKGLTGVPLALYGYRFYPDKNLELFSVGPFYYTGPKAAPATPKY</sequence>
<name>PRP3_ARATH</name>
<accession>Q9LZJ7</accession>
<accession>Q9M7N9</accession>
<protein>
    <recommendedName>
        <fullName>Proline-rich protein 3</fullName>
        <shortName>AtPRP3</shortName>
    </recommendedName>
</protein>
<evidence type="ECO:0000255" key="1"/>
<evidence type="ECO:0000269" key="2">
    <source>
    </source>
</evidence>
<evidence type="ECO:0000269" key="3">
    <source>
    </source>
</evidence>
<evidence type="ECO:0000269" key="4">
    <source>
    </source>
</evidence>
<evidence type="ECO:0000305" key="5"/>
<comment type="function">
    <text evidence="3">May contribute to cell wall structure in root hairs.</text>
</comment>
<comment type="subcellular location">
    <subcellularLocation>
        <location evidence="5">Secreted</location>
        <location evidence="5">Cell wall</location>
    </subcellularLocation>
</comment>
<comment type="tissue specificity">
    <text evidence="2 3 4">Exclusively expressed in roots, particularly in root hairs-containing regions, and especially in root hairs.</text>
</comment>
<comment type="developmental stage">
    <text evidence="2 3">After germination, present in root epidermis and root hairs localized around the transition zone marking the root/shoot junction. Later expressed in root epidermis and root hairs, mostly in the root zone forming new hairs. Absent from the root tip. In adult plants restricted to root hair development regions of the main root and lateral roots.</text>
</comment>
<comment type="induction">
    <text evidence="3">By 1-aminocyclo-propane-1-carboxylic acid (ACC) and a-naphthaleneacetic acid (alpha-NAA), ethylene and auxin precursors. Repressed by the ethylene inhibitor 1-a-(2-aminoethoxyvinyl)glycine (AVG). Lower levels in calcium-depleted conditions.</text>
</comment>
<comment type="similarity">
    <text evidence="5">Belongs to the plant proline-rich protein superfamily. ENOD12 family.</text>
</comment>